<gene>
    <name evidence="1" type="primary">rplJ</name>
    <name type="ordered locus">Franean1_6059</name>
</gene>
<protein>
    <recommendedName>
        <fullName evidence="1">Large ribosomal subunit protein uL10</fullName>
    </recommendedName>
    <alternativeName>
        <fullName evidence="2">50S ribosomal protein L10</fullName>
    </alternativeName>
</protein>
<feature type="chain" id="PRO_1000120966" description="Large ribosomal subunit protein uL10">
    <location>
        <begin position="1"/>
        <end position="182"/>
    </location>
</feature>
<proteinExistence type="inferred from homology"/>
<reference key="1">
    <citation type="journal article" date="2007" name="Genome Res.">
        <title>Genome characteristics of facultatively symbiotic Frankia sp. strains reflect host range and host plant biogeography.</title>
        <authorList>
            <person name="Normand P."/>
            <person name="Lapierre P."/>
            <person name="Tisa L.S."/>
            <person name="Gogarten J.P."/>
            <person name="Alloisio N."/>
            <person name="Bagnarol E."/>
            <person name="Bassi C.A."/>
            <person name="Berry A.M."/>
            <person name="Bickhart D.M."/>
            <person name="Choisne N."/>
            <person name="Couloux A."/>
            <person name="Cournoyer B."/>
            <person name="Cruveiller S."/>
            <person name="Daubin V."/>
            <person name="Demange N."/>
            <person name="Francino M.P."/>
            <person name="Goltsman E."/>
            <person name="Huang Y."/>
            <person name="Kopp O.R."/>
            <person name="Labarre L."/>
            <person name="Lapidus A."/>
            <person name="Lavire C."/>
            <person name="Marechal J."/>
            <person name="Martinez M."/>
            <person name="Mastronunzio J.E."/>
            <person name="Mullin B.C."/>
            <person name="Niemann J."/>
            <person name="Pujic P."/>
            <person name="Rawnsley T."/>
            <person name="Rouy Z."/>
            <person name="Schenowitz C."/>
            <person name="Sellstedt A."/>
            <person name="Tavares F."/>
            <person name="Tomkins J.P."/>
            <person name="Vallenet D."/>
            <person name="Valverde C."/>
            <person name="Wall L.G."/>
            <person name="Wang Y."/>
            <person name="Medigue C."/>
            <person name="Benson D.R."/>
        </authorList>
    </citation>
    <scope>NUCLEOTIDE SEQUENCE [LARGE SCALE GENOMIC DNA]</scope>
    <source>
        <strain>EAN1pec</strain>
    </source>
</reference>
<keyword id="KW-0687">Ribonucleoprotein</keyword>
<keyword id="KW-0689">Ribosomal protein</keyword>
<keyword id="KW-0694">RNA-binding</keyword>
<keyword id="KW-0699">rRNA-binding</keyword>
<dbReference type="EMBL" id="CP000820">
    <property type="protein sequence ID" value="ABW15403.1"/>
    <property type="molecule type" value="Genomic_DNA"/>
</dbReference>
<dbReference type="RefSeq" id="WP_020463486.1">
    <property type="nucleotide sequence ID" value="NC_009921.1"/>
</dbReference>
<dbReference type="SMR" id="A8LC66"/>
<dbReference type="STRING" id="298653.Franean1_6059"/>
<dbReference type="KEGG" id="fre:Franean1_6059"/>
<dbReference type="eggNOG" id="COG0244">
    <property type="taxonomic scope" value="Bacteria"/>
</dbReference>
<dbReference type="HOGENOM" id="CLU_092227_1_0_11"/>
<dbReference type="GO" id="GO:0015934">
    <property type="term" value="C:large ribosomal subunit"/>
    <property type="evidence" value="ECO:0007669"/>
    <property type="project" value="InterPro"/>
</dbReference>
<dbReference type="GO" id="GO:0070180">
    <property type="term" value="F:large ribosomal subunit rRNA binding"/>
    <property type="evidence" value="ECO:0007669"/>
    <property type="project" value="UniProtKB-UniRule"/>
</dbReference>
<dbReference type="GO" id="GO:0003735">
    <property type="term" value="F:structural constituent of ribosome"/>
    <property type="evidence" value="ECO:0007669"/>
    <property type="project" value="InterPro"/>
</dbReference>
<dbReference type="GO" id="GO:0006412">
    <property type="term" value="P:translation"/>
    <property type="evidence" value="ECO:0007669"/>
    <property type="project" value="UniProtKB-UniRule"/>
</dbReference>
<dbReference type="CDD" id="cd05797">
    <property type="entry name" value="Ribosomal_L10"/>
    <property type="match status" value="1"/>
</dbReference>
<dbReference type="Gene3D" id="3.30.70.1730">
    <property type="match status" value="1"/>
</dbReference>
<dbReference type="Gene3D" id="6.10.250.290">
    <property type="match status" value="1"/>
</dbReference>
<dbReference type="HAMAP" id="MF_00362">
    <property type="entry name" value="Ribosomal_uL10"/>
    <property type="match status" value="1"/>
</dbReference>
<dbReference type="InterPro" id="IPR001790">
    <property type="entry name" value="Ribosomal_uL10"/>
</dbReference>
<dbReference type="InterPro" id="IPR043141">
    <property type="entry name" value="Ribosomal_uL10-like_sf"/>
</dbReference>
<dbReference type="InterPro" id="IPR022973">
    <property type="entry name" value="Ribosomal_uL10_bac"/>
</dbReference>
<dbReference type="InterPro" id="IPR047865">
    <property type="entry name" value="Ribosomal_uL10_bac_type"/>
</dbReference>
<dbReference type="InterPro" id="IPR002363">
    <property type="entry name" value="Ribosomal_uL10_CS_bac"/>
</dbReference>
<dbReference type="NCBIfam" id="NF000955">
    <property type="entry name" value="PRK00099.1-1"/>
    <property type="match status" value="1"/>
</dbReference>
<dbReference type="PANTHER" id="PTHR11560">
    <property type="entry name" value="39S RIBOSOMAL PROTEIN L10, MITOCHONDRIAL"/>
    <property type="match status" value="1"/>
</dbReference>
<dbReference type="Pfam" id="PF00466">
    <property type="entry name" value="Ribosomal_L10"/>
    <property type="match status" value="1"/>
</dbReference>
<dbReference type="SUPFAM" id="SSF160369">
    <property type="entry name" value="Ribosomal protein L10-like"/>
    <property type="match status" value="1"/>
</dbReference>
<dbReference type="PROSITE" id="PS01109">
    <property type="entry name" value="RIBOSOMAL_L10"/>
    <property type="match status" value="1"/>
</dbReference>
<organism>
    <name type="scientific">Parafrankia sp. (strain EAN1pec)</name>
    <dbReference type="NCBI Taxonomy" id="298653"/>
    <lineage>
        <taxon>Bacteria</taxon>
        <taxon>Bacillati</taxon>
        <taxon>Actinomycetota</taxon>
        <taxon>Actinomycetes</taxon>
        <taxon>Frankiales</taxon>
        <taxon>Frankiaceae</taxon>
        <taxon>Parafrankia</taxon>
    </lineage>
</organism>
<accession>A8LC66</accession>
<comment type="function">
    <text evidence="1">Forms part of the ribosomal stalk, playing a central role in the interaction of the ribosome with GTP-bound translation factors.</text>
</comment>
<comment type="subunit">
    <text evidence="1">Part of the ribosomal stalk of the 50S ribosomal subunit. The N-terminus interacts with L11 and the large rRNA to form the base of the stalk. The C-terminus forms an elongated spine to which L12 dimers bind in a sequential fashion forming a multimeric L10(L12)X complex.</text>
</comment>
<comment type="similarity">
    <text evidence="1">Belongs to the universal ribosomal protein uL10 family.</text>
</comment>
<name>RL10_PARS2</name>
<evidence type="ECO:0000255" key="1">
    <source>
        <dbReference type="HAMAP-Rule" id="MF_00362"/>
    </source>
</evidence>
<evidence type="ECO:0000305" key="2"/>
<sequence length="182" mass="18791">MANSEKTAAVAEIAEDFRGSSAAVLTEYRGLTVSQLTELRRALGETTRYAVVKNTLTKIAAAQAGVTGIDELLVGPTAVAFVGGDPVEAAKGLRDFARANPALVVKGGVVEGKAMNADEIRRLADLESREVLLAKMAGAMNGSLAKAVGLFAAPLSQVARLAEALRAQREETAGAEPVSVDA</sequence>